<name>MHPD_PARP8</name>
<protein>
    <recommendedName>
        <fullName evidence="1">2-keto-4-pentenoate hydratase</fullName>
        <ecNumber evidence="1">4.2.1.80</ecNumber>
    </recommendedName>
    <alternativeName>
        <fullName evidence="1">2-hydroxypentadienoic acid hydratase</fullName>
    </alternativeName>
</protein>
<keyword id="KW-0058">Aromatic hydrocarbons catabolism</keyword>
<keyword id="KW-0456">Lyase</keyword>
<keyword id="KW-1185">Reference proteome</keyword>
<proteinExistence type="inferred from homology"/>
<feature type="chain" id="PRO_1000187019" description="2-keto-4-pentenoate hydratase">
    <location>
        <begin position="1"/>
        <end position="262"/>
    </location>
</feature>
<accession>B2JQV8</accession>
<comment type="function">
    <text evidence="1">Catalyzes the conversion of 2-hydroxypentadienoic acid (enolic form of 2-oxopent-4-enoate) to 4-hydroxy-2-ketopentanoic acid.</text>
</comment>
<comment type="catalytic activity">
    <reaction evidence="1">
        <text>(S)-4-hydroxy-2-oxopentanoate = (2Z)-2-hydroxypenta-2,4-dienoate + H2O</text>
        <dbReference type="Rhea" id="RHEA:22580"/>
        <dbReference type="ChEBI" id="CHEBI:15377"/>
        <dbReference type="ChEBI" id="CHEBI:67152"/>
        <dbReference type="ChEBI" id="CHEBI:73143"/>
        <dbReference type="EC" id="4.2.1.80"/>
    </reaction>
</comment>
<comment type="cofactor">
    <cofactor evidence="1">
        <name>a divalent metal cation</name>
        <dbReference type="ChEBI" id="CHEBI:60240"/>
    </cofactor>
</comment>
<comment type="pathway">
    <text evidence="1">Aromatic compound metabolism; 3-phenylpropanoate degradation.</text>
</comment>
<comment type="similarity">
    <text evidence="1">Belongs to the hydratase/decarboxylase family. MhpD subfamily.</text>
</comment>
<evidence type="ECO:0000255" key="1">
    <source>
        <dbReference type="HAMAP-Rule" id="MF_01655"/>
    </source>
</evidence>
<reference key="1">
    <citation type="journal article" date="2014" name="Stand. Genomic Sci.">
        <title>Complete genome sequence of Burkholderia phymatum STM815(T), a broad host range and efficient nitrogen-fixing symbiont of Mimosa species.</title>
        <authorList>
            <person name="Moulin L."/>
            <person name="Klonowska A."/>
            <person name="Caroline B."/>
            <person name="Booth K."/>
            <person name="Vriezen J.A."/>
            <person name="Melkonian R."/>
            <person name="James E.K."/>
            <person name="Young J.P."/>
            <person name="Bena G."/>
            <person name="Hauser L."/>
            <person name="Land M."/>
            <person name="Kyrpides N."/>
            <person name="Bruce D."/>
            <person name="Chain P."/>
            <person name="Copeland A."/>
            <person name="Pitluck S."/>
            <person name="Woyke T."/>
            <person name="Lizotte-Waniewski M."/>
            <person name="Bristow J."/>
            <person name="Riley M."/>
        </authorList>
    </citation>
    <scope>NUCLEOTIDE SEQUENCE [LARGE SCALE GENOMIC DNA]</scope>
    <source>
        <strain>DSM 17167 / CIP 108236 / LMG 21445 / STM815</strain>
    </source>
</reference>
<dbReference type="EC" id="4.2.1.80" evidence="1"/>
<dbReference type="EMBL" id="CP001044">
    <property type="protein sequence ID" value="ACC73649.1"/>
    <property type="molecule type" value="Genomic_DNA"/>
</dbReference>
<dbReference type="RefSeq" id="WP_012403821.1">
    <property type="nucleotide sequence ID" value="NC_010623.1"/>
</dbReference>
<dbReference type="SMR" id="B2JQV8"/>
<dbReference type="STRING" id="391038.Bphy_4537"/>
<dbReference type="KEGG" id="bph:Bphy_4537"/>
<dbReference type="eggNOG" id="COG3971">
    <property type="taxonomic scope" value="Bacteria"/>
</dbReference>
<dbReference type="HOGENOM" id="CLU_060136_4_1_4"/>
<dbReference type="OrthoDB" id="9792137at2"/>
<dbReference type="UniPathway" id="UPA00714"/>
<dbReference type="Proteomes" id="UP000001192">
    <property type="component" value="Chromosome 2"/>
</dbReference>
<dbReference type="GO" id="GO:0005737">
    <property type="term" value="C:cytoplasm"/>
    <property type="evidence" value="ECO:0007669"/>
    <property type="project" value="TreeGrafter"/>
</dbReference>
<dbReference type="GO" id="GO:0008684">
    <property type="term" value="F:2-oxopent-4-enoate hydratase activity"/>
    <property type="evidence" value="ECO:0007669"/>
    <property type="project" value="UniProtKB-UniRule"/>
</dbReference>
<dbReference type="GO" id="GO:0030145">
    <property type="term" value="F:manganese ion binding"/>
    <property type="evidence" value="ECO:0007669"/>
    <property type="project" value="InterPro"/>
</dbReference>
<dbReference type="GO" id="GO:0019380">
    <property type="term" value="P:3-phenylpropionate catabolic process"/>
    <property type="evidence" value="ECO:0007669"/>
    <property type="project" value="UniProtKB-UniRule"/>
</dbReference>
<dbReference type="Gene3D" id="3.90.850.10">
    <property type="entry name" value="Fumarylacetoacetase-like, C-terminal domain"/>
    <property type="match status" value="1"/>
</dbReference>
<dbReference type="HAMAP" id="MF_01655">
    <property type="entry name" value="MhpD"/>
    <property type="match status" value="1"/>
</dbReference>
<dbReference type="InterPro" id="IPR011234">
    <property type="entry name" value="Fumarylacetoacetase-like_C"/>
</dbReference>
<dbReference type="InterPro" id="IPR036663">
    <property type="entry name" value="Fumarylacetoacetase_C_sf"/>
</dbReference>
<dbReference type="InterPro" id="IPR050772">
    <property type="entry name" value="Hydratase-Decarb/MhpD_sf"/>
</dbReference>
<dbReference type="InterPro" id="IPR023793">
    <property type="entry name" value="Keto_pentenoate-hydratase"/>
</dbReference>
<dbReference type="NCBIfam" id="NF008461">
    <property type="entry name" value="PRK11342.1"/>
    <property type="match status" value="1"/>
</dbReference>
<dbReference type="PANTHER" id="PTHR30143:SF0">
    <property type="entry name" value="2-KETO-4-PENTENOATE HYDRATASE"/>
    <property type="match status" value="1"/>
</dbReference>
<dbReference type="PANTHER" id="PTHR30143">
    <property type="entry name" value="ACID HYDRATASE"/>
    <property type="match status" value="1"/>
</dbReference>
<dbReference type="Pfam" id="PF01557">
    <property type="entry name" value="FAA_hydrolase"/>
    <property type="match status" value="1"/>
</dbReference>
<dbReference type="SUPFAM" id="SSF56529">
    <property type="entry name" value="FAH"/>
    <property type="match status" value="1"/>
</dbReference>
<gene>
    <name evidence="1" type="primary">mhpD</name>
    <name type="ordered locus">Bphy_4537</name>
</gene>
<sequence>MSDDNRIESMAARLREAQSSRQTIAPLREACPEGDATLAYAIQQVNNDLRAANGERLVGRKIGLTSPAVQKQLGVGQPDFGALFASMAYGDSQPMPLASLVQPKVEAEIALVLERDLTAEKNTFADLIGATAYALAAIEVVDSRIRDWDIRFFDTVADNASSALFVLGSRPVLLRDIDLTACAMTLTQDGEILSRGNGTACLGNPLNAAAWLADRMVRLGTPLRAGDIVLTGALGPMVAVKAAGTYTAHIEGLGSVRASFSE</sequence>
<organism>
    <name type="scientific">Paraburkholderia phymatum (strain DSM 17167 / CIP 108236 / LMG 21445 / STM815)</name>
    <name type="common">Burkholderia phymatum</name>
    <dbReference type="NCBI Taxonomy" id="391038"/>
    <lineage>
        <taxon>Bacteria</taxon>
        <taxon>Pseudomonadati</taxon>
        <taxon>Pseudomonadota</taxon>
        <taxon>Betaproteobacteria</taxon>
        <taxon>Burkholderiales</taxon>
        <taxon>Burkholderiaceae</taxon>
        <taxon>Paraburkholderia</taxon>
    </lineage>
</organism>